<dbReference type="EMBL" id="AE015929">
    <property type="protein sequence ID" value="AAO04207.1"/>
    <property type="molecule type" value="Genomic_DNA"/>
</dbReference>
<dbReference type="RefSeq" id="NP_764165.1">
    <property type="nucleotide sequence ID" value="NC_004461.1"/>
</dbReference>
<dbReference type="SMR" id="Q8CTA3"/>
<dbReference type="KEGG" id="sep:SE_0610"/>
<dbReference type="PATRIC" id="fig|176280.10.peg.581"/>
<dbReference type="eggNOG" id="COG0719">
    <property type="taxonomic scope" value="Bacteria"/>
</dbReference>
<dbReference type="HOGENOM" id="CLU_026231_0_1_9"/>
<dbReference type="OrthoDB" id="9803529at2"/>
<dbReference type="Proteomes" id="UP000001411">
    <property type="component" value="Chromosome"/>
</dbReference>
<dbReference type="GO" id="GO:0016226">
    <property type="term" value="P:iron-sulfur cluster assembly"/>
    <property type="evidence" value="ECO:0007669"/>
    <property type="project" value="InterPro"/>
</dbReference>
<dbReference type="InterPro" id="IPR055346">
    <property type="entry name" value="Fe-S_cluster_assembly_SufBD"/>
</dbReference>
<dbReference type="InterPro" id="IPR010231">
    <property type="entry name" value="SUF_FeS_clus_asmbl_SufB"/>
</dbReference>
<dbReference type="InterPro" id="IPR000825">
    <property type="entry name" value="SUF_FeS_clus_asmbl_SufBD_core"/>
</dbReference>
<dbReference type="InterPro" id="IPR037284">
    <property type="entry name" value="SUF_FeS_clus_asmbl_SufBD_sf"/>
</dbReference>
<dbReference type="InterPro" id="IPR045595">
    <property type="entry name" value="SufBD_N"/>
</dbReference>
<dbReference type="NCBIfam" id="TIGR01980">
    <property type="entry name" value="sufB"/>
    <property type="match status" value="1"/>
</dbReference>
<dbReference type="PANTHER" id="PTHR30508">
    <property type="entry name" value="FES CLUSTER ASSEMBLY PROTEIN SUF"/>
    <property type="match status" value="1"/>
</dbReference>
<dbReference type="PANTHER" id="PTHR30508:SF1">
    <property type="entry name" value="UPF0051 PROTEIN ABCI8, CHLOROPLASTIC-RELATED"/>
    <property type="match status" value="1"/>
</dbReference>
<dbReference type="Pfam" id="PF01458">
    <property type="entry name" value="SUFBD_core"/>
    <property type="match status" value="1"/>
</dbReference>
<dbReference type="Pfam" id="PF19295">
    <property type="entry name" value="SufBD_N"/>
    <property type="match status" value="1"/>
</dbReference>
<dbReference type="SUPFAM" id="SSF101960">
    <property type="entry name" value="Stabilizer of iron transporter SufD"/>
    <property type="match status" value="1"/>
</dbReference>
<proteinExistence type="inferred from homology"/>
<name>Y610_STAES</name>
<comment type="similarity">
    <text evidence="1">Belongs to the iron-sulfur cluster assembly SufBD family.</text>
</comment>
<organism>
    <name type="scientific">Staphylococcus epidermidis (strain ATCC 12228 / FDA PCI 1200)</name>
    <dbReference type="NCBI Taxonomy" id="176280"/>
    <lineage>
        <taxon>Bacteria</taxon>
        <taxon>Bacillati</taxon>
        <taxon>Bacillota</taxon>
        <taxon>Bacilli</taxon>
        <taxon>Bacillales</taxon>
        <taxon>Staphylococcaceae</taxon>
        <taxon>Staphylococcus</taxon>
    </lineage>
</organism>
<evidence type="ECO:0000305" key="1"/>
<gene>
    <name type="ordered locus">SE_0610</name>
</gene>
<sequence length="465" mass="52538">MAKQAPDVGDYKYGFHDEDVSIFRSERGLTENIVTEISKMKEEPQWMLDFRLKALKLFYKMPMPQWGGDLSELDFDDITYYVKPSEHTERSWDEVPEEIKRTFDKLGIPEAEQKYLAGVSAQYESEVVYHNMEKELEEKGIIFKDTDSALRENEELFREYFASVVPAADNKFAALNSAVWSGGSFIYVPKNVKLDTPLQAYFRINSENMGQFERTLIIADEGASVNYVEGCTAPVYSTSSLHSAVVEIIVHKDAHVRYTTIQNWANNVYNLVTKRTFVHENGNMEWVDGNLGSKLTMKYPNCVLLGEGAKGSTLSIAFASKGQVQDAGAKMIHKAPNTSSTIVSKSISKNGGKVIYRGIVHFGRKAKGARSNIECDTLILDNESTSDTIPYNEVFNDNISLEHEAKVSKVSEEQLFYLMSRGISEEEATEMIVMGFIEPFTKELPMEYAVEMNRLIKFEMEGSIG</sequence>
<protein>
    <recommendedName>
        <fullName>Iron-sulfur cluster assembly SufBD family protein SE_0610</fullName>
    </recommendedName>
</protein>
<accession>Q8CTA3</accession>
<feature type="chain" id="PRO_0000298959" description="Iron-sulfur cluster assembly SufBD family protein SE_0610">
    <location>
        <begin position="1"/>
        <end position="465"/>
    </location>
</feature>
<reference key="1">
    <citation type="journal article" date="2003" name="Mol. Microbiol.">
        <title>Genome-based analysis of virulence genes in a non-biofilm-forming Staphylococcus epidermidis strain (ATCC 12228).</title>
        <authorList>
            <person name="Zhang Y.-Q."/>
            <person name="Ren S.-X."/>
            <person name="Li H.-L."/>
            <person name="Wang Y.-X."/>
            <person name="Fu G."/>
            <person name="Yang J."/>
            <person name="Qin Z.-Q."/>
            <person name="Miao Y.-G."/>
            <person name="Wang W.-Y."/>
            <person name="Chen R.-S."/>
            <person name="Shen Y."/>
            <person name="Chen Z."/>
            <person name="Yuan Z.-H."/>
            <person name="Zhao G.-P."/>
            <person name="Qu D."/>
            <person name="Danchin A."/>
            <person name="Wen Y.-M."/>
        </authorList>
    </citation>
    <scope>NUCLEOTIDE SEQUENCE [LARGE SCALE GENOMIC DNA]</scope>
    <source>
        <strain>ATCC 12228 / FDA PCI 1200</strain>
    </source>
</reference>